<evidence type="ECO:0000255" key="1">
    <source>
        <dbReference type="HAMAP-Rule" id="MF_00019"/>
    </source>
</evidence>
<sequence>MKIAIDAMGGDHAPKAVVLGAMKAIKEYSDLHITLVGKEEEIRQYLTSDERITILHTDEKIESTEEPVRAVRRKKQASMVLAAQQVKDGEADACISAGSTGALMAAGLFVVGRMEGIERPALSPTMPTVDGKGFVMLDVGANVDAKPIHLYQYAVMGSVYAEKVRGIENPRVGLLNVGTEDEKGNELSKQVFAMLKDAPINFVGNVESRDLLQGVADVVVCDGFTGNVALKSLEGTALALFSMLKEQLMSSFTSKLAAAVLKPKLMVLKDKMDYSEYGGAALFGLKAPVIKAHGSSNDQSIFSAIRQTREMVAKEVIPTISSVMEKESLQ</sequence>
<protein>
    <recommendedName>
        <fullName evidence="1">Phosphate acyltransferase</fullName>
        <ecNumber evidence="1">2.3.1.274</ecNumber>
    </recommendedName>
    <alternativeName>
        <fullName evidence="1">Acyl-ACP phosphotransacylase</fullName>
    </alternativeName>
    <alternativeName>
        <fullName evidence="1">Acyl-[acyl-carrier-protein]--phosphate acyltransferase</fullName>
    </alternativeName>
    <alternativeName>
        <fullName evidence="1">Phosphate-acyl-ACP acyltransferase</fullName>
    </alternativeName>
</protein>
<proteinExistence type="inferred from homology"/>
<keyword id="KW-0963">Cytoplasm</keyword>
<keyword id="KW-0444">Lipid biosynthesis</keyword>
<keyword id="KW-0443">Lipid metabolism</keyword>
<keyword id="KW-0594">Phospholipid biosynthesis</keyword>
<keyword id="KW-1208">Phospholipid metabolism</keyword>
<keyword id="KW-0808">Transferase</keyword>
<accession>B7HDX6</accession>
<dbReference type="EC" id="2.3.1.274" evidence="1"/>
<dbReference type="EMBL" id="CP001176">
    <property type="protein sequence ID" value="ACK59405.1"/>
    <property type="molecule type" value="Genomic_DNA"/>
</dbReference>
<dbReference type="RefSeq" id="WP_000684096.1">
    <property type="nucleotide sequence ID" value="NC_011725.1"/>
</dbReference>
<dbReference type="SMR" id="B7HDX6"/>
<dbReference type="KEGG" id="bcb:BCB4264_A3952"/>
<dbReference type="HOGENOM" id="CLU_039379_1_1_9"/>
<dbReference type="UniPathway" id="UPA00085"/>
<dbReference type="Proteomes" id="UP000007096">
    <property type="component" value="Chromosome"/>
</dbReference>
<dbReference type="GO" id="GO:0005737">
    <property type="term" value="C:cytoplasm"/>
    <property type="evidence" value="ECO:0007669"/>
    <property type="project" value="UniProtKB-SubCell"/>
</dbReference>
<dbReference type="GO" id="GO:0043811">
    <property type="term" value="F:phosphate:acyl-[acyl carrier protein] acyltransferase activity"/>
    <property type="evidence" value="ECO:0007669"/>
    <property type="project" value="UniProtKB-UniRule"/>
</dbReference>
<dbReference type="GO" id="GO:0006633">
    <property type="term" value="P:fatty acid biosynthetic process"/>
    <property type="evidence" value="ECO:0007669"/>
    <property type="project" value="UniProtKB-UniRule"/>
</dbReference>
<dbReference type="GO" id="GO:0008654">
    <property type="term" value="P:phospholipid biosynthetic process"/>
    <property type="evidence" value="ECO:0007669"/>
    <property type="project" value="UniProtKB-KW"/>
</dbReference>
<dbReference type="Gene3D" id="3.40.718.10">
    <property type="entry name" value="Isopropylmalate Dehydrogenase"/>
    <property type="match status" value="1"/>
</dbReference>
<dbReference type="HAMAP" id="MF_00019">
    <property type="entry name" value="PlsX"/>
    <property type="match status" value="1"/>
</dbReference>
<dbReference type="InterPro" id="IPR003664">
    <property type="entry name" value="FA_synthesis"/>
</dbReference>
<dbReference type="InterPro" id="IPR012281">
    <property type="entry name" value="Phospholipid_synth_PlsX-like"/>
</dbReference>
<dbReference type="NCBIfam" id="TIGR00182">
    <property type="entry name" value="plsX"/>
    <property type="match status" value="1"/>
</dbReference>
<dbReference type="PANTHER" id="PTHR30100">
    <property type="entry name" value="FATTY ACID/PHOSPHOLIPID SYNTHESIS PROTEIN PLSX"/>
    <property type="match status" value="1"/>
</dbReference>
<dbReference type="PANTHER" id="PTHR30100:SF1">
    <property type="entry name" value="PHOSPHATE ACYLTRANSFERASE"/>
    <property type="match status" value="1"/>
</dbReference>
<dbReference type="Pfam" id="PF02504">
    <property type="entry name" value="FA_synthesis"/>
    <property type="match status" value="1"/>
</dbReference>
<dbReference type="PIRSF" id="PIRSF002465">
    <property type="entry name" value="Phsphlp_syn_PlsX"/>
    <property type="match status" value="1"/>
</dbReference>
<dbReference type="SUPFAM" id="SSF53659">
    <property type="entry name" value="Isocitrate/Isopropylmalate dehydrogenase-like"/>
    <property type="match status" value="1"/>
</dbReference>
<name>PLSX_BACC4</name>
<feature type="chain" id="PRO_1000116372" description="Phosphate acyltransferase">
    <location>
        <begin position="1"/>
        <end position="330"/>
    </location>
</feature>
<reference key="1">
    <citation type="submission" date="2008-10" db="EMBL/GenBank/DDBJ databases">
        <title>Genome sequence of Bacillus cereus B4264.</title>
        <authorList>
            <person name="Dodson R.J."/>
            <person name="Durkin A.S."/>
            <person name="Rosovitz M.J."/>
            <person name="Rasko D.A."/>
            <person name="Hoffmaster A."/>
            <person name="Ravel J."/>
            <person name="Sutton G."/>
        </authorList>
    </citation>
    <scope>NUCLEOTIDE SEQUENCE [LARGE SCALE GENOMIC DNA]</scope>
    <source>
        <strain>B4264</strain>
    </source>
</reference>
<organism>
    <name type="scientific">Bacillus cereus (strain B4264)</name>
    <dbReference type="NCBI Taxonomy" id="405532"/>
    <lineage>
        <taxon>Bacteria</taxon>
        <taxon>Bacillati</taxon>
        <taxon>Bacillota</taxon>
        <taxon>Bacilli</taxon>
        <taxon>Bacillales</taxon>
        <taxon>Bacillaceae</taxon>
        <taxon>Bacillus</taxon>
        <taxon>Bacillus cereus group</taxon>
    </lineage>
</organism>
<comment type="function">
    <text evidence="1">Catalyzes the reversible formation of acyl-phosphate (acyl-PO(4)) from acyl-[acyl-carrier-protein] (acyl-ACP). This enzyme utilizes acyl-ACP as fatty acyl donor, but not acyl-CoA.</text>
</comment>
<comment type="catalytic activity">
    <reaction evidence="1">
        <text>a fatty acyl-[ACP] + phosphate = an acyl phosphate + holo-[ACP]</text>
        <dbReference type="Rhea" id="RHEA:42292"/>
        <dbReference type="Rhea" id="RHEA-COMP:9685"/>
        <dbReference type="Rhea" id="RHEA-COMP:14125"/>
        <dbReference type="ChEBI" id="CHEBI:43474"/>
        <dbReference type="ChEBI" id="CHEBI:59918"/>
        <dbReference type="ChEBI" id="CHEBI:64479"/>
        <dbReference type="ChEBI" id="CHEBI:138651"/>
        <dbReference type="EC" id="2.3.1.274"/>
    </reaction>
</comment>
<comment type="pathway">
    <text evidence="1">Lipid metabolism; phospholipid metabolism.</text>
</comment>
<comment type="subunit">
    <text evidence="1">Homodimer. Probably interacts with PlsY.</text>
</comment>
<comment type="subcellular location">
    <subcellularLocation>
        <location evidence="1">Cytoplasm</location>
    </subcellularLocation>
    <text evidence="1">Associated with the membrane possibly through PlsY.</text>
</comment>
<comment type="similarity">
    <text evidence="1">Belongs to the PlsX family.</text>
</comment>
<gene>
    <name evidence="1" type="primary">plsX</name>
    <name type="ordered locus">BCB4264_A3952</name>
</gene>